<gene>
    <name evidence="1" type="primary">prmA</name>
    <name type="ordered locus">Gura_4290</name>
</gene>
<feature type="chain" id="PRO_1000083352" description="Ribosomal protein L11 methyltransferase">
    <location>
        <begin position="1"/>
        <end position="315"/>
    </location>
</feature>
<feature type="binding site" evidence="1">
    <location>
        <position position="152"/>
    </location>
    <ligand>
        <name>S-adenosyl-L-methionine</name>
        <dbReference type="ChEBI" id="CHEBI:59789"/>
    </ligand>
</feature>
<feature type="binding site" evidence="1">
    <location>
        <position position="185"/>
    </location>
    <ligand>
        <name>S-adenosyl-L-methionine</name>
        <dbReference type="ChEBI" id="CHEBI:59789"/>
    </ligand>
</feature>
<feature type="binding site" evidence="1">
    <location>
        <position position="207"/>
    </location>
    <ligand>
        <name>S-adenosyl-L-methionine</name>
        <dbReference type="ChEBI" id="CHEBI:59789"/>
    </ligand>
</feature>
<feature type="binding site" evidence="1">
    <location>
        <position position="249"/>
    </location>
    <ligand>
        <name>S-adenosyl-L-methionine</name>
        <dbReference type="ChEBI" id="CHEBI:59789"/>
    </ligand>
</feature>
<keyword id="KW-0963">Cytoplasm</keyword>
<keyword id="KW-0489">Methyltransferase</keyword>
<keyword id="KW-1185">Reference proteome</keyword>
<keyword id="KW-0949">S-adenosyl-L-methionine</keyword>
<keyword id="KW-0808">Transferase</keyword>
<reference key="1">
    <citation type="submission" date="2007-05" db="EMBL/GenBank/DDBJ databases">
        <title>Complete sequence of Geobacter uraniireducens Rf4.</title>
        <authorList>
            <consortium name="US DOE Joint Genome Institute"/>
            <person name="Copeland A."/>
            <person name="Lucas S."/>
            <person name="Lapidus A."/>
            <person name="Barry K."/>
            <person name="Detter J.C."/>
            <person name="Glavina del Rio T."/>
            <person name="Hammon N."/>
            <person name="Israni S."/>
            <person name="Dalin E."/>
            <person name="Tice H."/>
            <person name="Pitluck S."/>
            <person name="Chertkov O."/>
            <person name="Brettin T."/>
            <person name="Bruce D."/>
            <person name="Han C."/>
            <person name="Schmutz J."/>
            <person name="Larimer F."/>
            <person name="Land M."/>
            <person name="Hauser L."/>
            <person name="Kyrpides N."/>
            <person name="Mikhailova N."/>
            <person name="Shelobolina E."/>
            <person name="Aklujkar M."/>
            <person name="Lovley D."/>
            <person name="Richardson P."/>
        </authorList>
    </citation>
    <scope>NUCLEOTIDE SEQUENCE [LARGE SCALE GENOMIC DNA]</scope>
    <source>
        <strain>ATCC BAA-1134 / JCM 13001 / Rf4</strain>
    </source>
</reference>
<sequence>MKTLWAEISCEVPVAMVDLLSDFLVELSGNGVSIENLALDTFSLETVEDSPVKTVKAYFNGDSPLGSQLDAIETFLHAHGSAFAGFVFKHPVVATIKEEDWANNWKEYFKPVRIGSRLVIKPTWEEYAAGEGDIVLKLDPGMAFGTGAHPTTKMCLEVLEMIFYGEGPYNGDGKHLDPVTVLDVGTGSGVLSIAAAKLGAERITAIDIDADAVSVAEENLALNDALPLVAVSTTALQDVPGRYDIVLANILAEELVRLAPELVDRTAPGGYLVLSGILTEKEEFVINGFGGFGLSLIERRREAEWSCLGFRLESK</sequence>
<comment type="function">
    <text evidence="1">Methylates ribosomal protein L11.</text>
</comment>
<comment type="catalytic activity">
    <reaction evidence="1">
        <text>L-lysyl-[protein] + 3 S-adenosyl-L-methionine = N(6),N(6),N(6)-trimethyl-L-lysyl-[protein] + 3 S-adenosyl-L-homocysteine + 3 H(+)</text>
        <dbReference type="Rhea" id="RHEA:54192"/>
        <dbReference type="Rhea" id="RHEA-COMP:9752"/>
        <dbReference type="Rhea" id="RHEA-COMP:13826"/>
        <dbReference type="ChEBI" id="CHEBI:15378"/>
        <dbReference type="ChEBI" id="CHEBI:29969"/>
        <dbReference type="ChEBI" id="CHEBI:57856"/>
        <dbReference type="ChEBI" id="CHEBI:59789"/>
        <dbReference type="ChEBI" id="CHEBI:61961"/>
    </reaction>
</comment>
<comment type="subcellular location">
    <subcellularLocation>
        <location evidence="1">Cytoplasm</location>
    </subcellularLocation>
</comment>
<comment type="similarity">
    <text evidence="1">Belongs to the methyltransferase superfamily. PrmA family.</text>
</comment>
<evidence type="ECO:0000255" key="1">
    <source>
        <dbReference type="HAMAP-Rule" id="MF_00735"/>
    </source>
</evidence>
<protein>
    <recommendedName>
        <fullName evidence="1">Ribosomal protein L11 methyltransferase</fullName>
        <shortName evidence="1">L11 Mtase</shortName>
        <ecNumber evidence="1">2.1.1.-</ecNumber>
    </recommendedName>
</protein>
<organism>
    <name type="scientific">Geotalea uraniireducens (strain Rf4)</name>
    <name type="common">Geobacter uraniireducens</name>
    <dbReference type="NCBI Taxonomy" id="351605"/>
    <lineage>
        <taxon>Bacteria</taxon>
        <taxon>Pseudomonadati</taxon>
        <taxon>Thermodesulfobacteriota</taxon>
        <taxon>Desulfuromonadia</taxon>
        <taxon>Geobacterales</taxon>
        <taxon>Geobacteraceae</taxon>
        <taxon>Geotalea</taxon>
    </lineage>
</organism>
<accession>A5G9G5</accession>
<proteinExistence type="inferred from homology"/>
<name>PRMA_GEOUR</name>
<dbReference type="EC" id="2.1.1.-" evidence="1"/>
<dbReference type="EMBL" id="CP000698">
    <property type="protein sequence ID" value="ABQ28433.1"/>
    <property type="molecule type" value="Genomic_DNA"/>
</dbReference>
<dbReference type="RefSeq" id="WP_011941063.1">
    <property type="nucleotide sequence ID" value="NC_009483.1"/>
</dbReference>
<dbReference type="SMR" id="A5G9G5"/>
<dbReference type="STRING" id="351605.Gura_4290"/>
<dbReference type="KEGG" id="gur:Gura_4290"/>
<dbReference type="HOGENOM" id="CLU_049382_0_1_7"/>
<dbReference type="OrthoDB" id="9785995at2"/>
<dbReference type="Proteomes" id="UP000006695">
    <property type="component" value="Chromosome"/>
</dbReference>
<dbReference type="GO" id="GO:0005737">
    <property type="term" value="C:cytoplasm"/>
    <property type="evidence" value="ECO:0007669"/>
    <property type="project" value="UniProtKB-SubCell"/>
</dbReference>
<dbReference type="GO" id="GO:0016279">
    <property type="term" value="F:protein-lysine N-methyltransferase activity"/>
    <property type="evidence" value="ECO:0007669"/>
    <property type="project" value="RHEA"/>
</dbReference>
<dbReference type="GO" id="GO:0032259">
    <property type="term" value="P:methylation"/>
    <property type="evidence" value="ECO:0007669"/>
    <property type="project" value="UniProtKB-KW"/>
</dbReference>
<dbReference type="CDD" id="cd02440">
    <property type="entry name" value="AdoMet_MTases"/>
    <property type="match status" value="1"/>
</dbReference>
<dbReference type="Gene3D" id="3.40.50.150">
    <property type="entry name" value="Vaccinia Virus protein VP39"/>
    <property type="match status" value="1"/>
</dbReference>
<dbReference type="HAMAP" id="MF_00735">
    <property type="entry name" value="Methyltr_PrmA"/>
    <property type="match status" value="1"/>
</dbReference>
<dbReference type="InterPro" id="IPR050078">
    <property type="entry name" value="Ribosomal_L11_MeTrfase_PrmA"/>
</dbReference>
<dbReference type="InterPro" id="IPR004498">
    <property type="entry name" value="Ribosomal_PrmA_MeTrfase"/>
</dbReference>
<dbReference type="InterPro" id="IPR029063">
    <property type="entry name" value="SAM-dependent_MTases_sf"/>
</dbReference>
<dbReference type="NCBIfam" id="TIGR00406">
    <property type="entry name" value="prmA"/>
    <property type="match status" value="1"/>
</dbReference>
<dbReference type="PANTHER" id="PTHR43648">
    <property type="entry name" value="ELECTRON TRANSFER FLAVOPROTEIN BETA SUBUNIT LYSINE METHYLTRANSFERASE"/>
    <property type="match status" value="1"/>
</dbReference>
<dbReference type="PANTHER" id="PTHR43648:SF1">
    <property type="entry name" value="ELECTRON TRANSFER FLAVOPROTEIN BETA SUBUNIT LYSINE METHYLTRANSFERASE"/>
    <property type="match status" value="1"/>
</dbReference>
<dbReference type="Pfam" id="PF06325">
    <property type="entry name" value="PrmA"/>
    <property type="match status" value="1"/>
</dbReference>
<dbReference type="PIRSF" id="PIRSF000401">
    <property type="entry name" value="RPL11_MTase"/>
    <property type="match status" value="1"/>
</dbReference>
<dbReference type="SUPFAM" id="SSF53335">
    <property type="entry name" value="S-adenosyl-L-methionine-dependent methyltransferases"/>
    <property type="match status" value="1"/>
</dbReference>